<protein>
    <recommendedName>
        <fullName evidence="1">L-lactate dehydrogenase</fullName>
        <ecNumber evidence="1">1.1.-.-</ecNumber>
    </recommendedName>
</protein>
<gene>
    <name evidence="1" type="primary">lldD</name>
    <name type="ordered locus">VC_A0984</name>
</gene>
<dbReference type="EC" id="1.1.-.-" evidence="1"/>
<dbReference type="EMBL" id="AE003853">
    <property type="protein sequence ID" value="AAF96880.1"/>
    <property type="molecule type" value="Genomic_DNA"/>
</dbReference>
<dbReference type="PIR" id="B82392">
    <property type="entry name" value="B82392"/>
</dbReference>
<dbReference type="RefSeq" id="NP_233368.1">
    <property type="nucleotide sequence ID" value="NC_002506.1"/>
</dbReference>
<dbReference type="RefSeq" id="WP_000587013.1">
    <property type="nucleotide sequence ID" value="NZ_LT906615.1"/>
</dbReference>
<dbReference type="SMR" id="Q9KKW6"/>
<dbReference type="STRING" id="243277.VC_A0984"/>
<dbReference type="DNASU" id="2612817"/>
<dbReference type="EnsemblBacteria" id="AAF96880">
    <property type="protein sequence ID" value="AAF96880"/>
    <property type="gene ID" value="VC_A0984"/>
</dbReference>
<dbReference type="KEGG" id="vch:VC_A0984"/>
<dbReference type="PATRIC" id="fig|243277.26.peg.3592"/>
<dbReference type="eggNOG" id="COG1304">
    <property type="taxonomic scope" value="Bacteria"/>
</dbReference>
<dbReference type="HOGENOM" id="CLU_020639_0_0_6"/>
<dbReference type="Proteomes" id="UP000000584">
    <property type="component" value="Chromosome 2"/>
</dbReference>
<dbReference type="GO" id="GO:0005886">
    <property type="term" value="C:plasma membrane"/>
    <property type="evidence" value="ECO:0000318"/>
    <property type="project" value="GO_Central"/>
</dbReference>
<dbReference type="GO" id="GO:0010181">
    <property type="term" value="F:FMN binding"/>
    <property type="evidence" value="ECO:0007669"/>
    <property type="project" value="InterPro"/>
</dbReference>
<dbReference type="GO" id="GO:0004459">
    <property type="term" value="F:L-lactate dehydrogenase activity"/>
    <property type="evidence" value="ECO:0000318"/>
    <property type="project" value="GO_Central"/>
</dbReference>
<dbReference type="GO" id="GO:0009060">
    <property type="term" value="P:aerobic respiration"/>
    <property type="evidence" value="ECO:0000318"/>
    <property type="project" value="GO_Central"/>
</dbReference>
<dbReference type="GO" id="GO:0006089">
    <property type="term" value="P:lactate metabolic process"/>
    <property type="evidence" value="ECO:0007669"/>
    <property type="project" value="UniProtKB-UniRule"/>
</dbReference>
<dbReference type="CDD" id="cd02809">
    <property type="entry name" value="alpha_hydroxyacid_oxid_FMN"/>
    <property type="match status" value="1"/>
</dbReference>
<dbReference type="FunFam" id="3.20.20.70:FF:000029">
    <property type="entry name" value="L-lactate dehydrogenase"/>
    <property type="match status" value="1"/>
</dbReference>
<dbReference type="Gene3D" id="3.20.20.70">
    <property type="entry name" value="Aldolase class I"/>
    <property type="match status" value="1"/>
</dbReference>
<dbReference type="HAMAP" id="MF_01559">
    <property type="entry name" value="L_lact_dehydr"/>
    <property type="match status" value="1"/>
</dbReference>
<dbReference type="InterPro" id="IPR013785">
    <property type="entry name" value="Aldolase_TIM"/>
</dbReference>
<dbReference type="InterPro" id="IPR012133">
    <property type="entry name" value="Alpha-hydoxy_acid_DH_FMN"/>
</dbReference>
<dbReference type="InterPro" id="IPR000262">
    <property type="entry name" value="FMN-dep_DH"/>
</dbReference>
<dbReference type="InterPro" id="IPR037396">
    <property type="entry name" value="FMN_HAD"/>
</dbReference>
<dbReference type="InterPro" id="IPR008259">
    <property type="entry name" value="FMN_hydac_DH_AS"/>
</dbReference>
<dbReference type="InterPro" id="IPR020920">
    <property type="entry name" value="LldD"/>
</dbReference>
<dbReference type="NCBIfam" id="NF033901">
    <property type="entry name" value="L_lactate_LldD"/>
    <property type="match status" value="1"/>
</dbReference>
<dbReference type="NCBIfam" id="NF008398">
    <property type="entry name" value="PRK11197.1"/>
    <property type="match status" value="1"/>
</dbReference>
<dbReference type="PANTHER" id="PTHR10578:SF85">
    <property type="entry name" value="L-LACTATE DEHYDROGENASE"/>
    <property type="match status" value="1"/>
</dbReference>
<dbReference type="PANTHER" id="PTHR10578">
    <property type="entry name" value="S -2-HYDROXY-ACID OXIDASE-RELATED"/>
    <property type="match status" value="1"/>
</dbReference>
<dbReference type="Pfam" id="PF01070">
    <property type="entry name" value="FMN_dh"/>
    <property type="match status" value="1"/>
</dbReference>
<dbReference type="PIRSF" id="PIRSF000138">
    <property type="entry name" value="Al-hdrx_acd_dh"/>
    <property type="match status" value="1"/>
</dbReference>
<dbReference type="SUPFAM" id="SSF51395">
    <property type="entry name" value="FMN-linked oxidoreductases"/>
    <property type="match status" value="1"/>
</dbReference>
<dbReference type="PROSITE" id="PS00557">
    <property type="entry name" value="FMN_HYDROXY_ACID_DH_1"/>
    <property type="match status" value="1"/>
</dbReference>
<dbReference type="PROSITE" id="PS51349">
    <property type="entry name" value="FMN_HYDROXY_ACID_DH_2"/>
    <property type="match status" value="1"/>
</dbReference>
<organism>
    <name type="scientific">Vibrio cholerae serotype O1 (strain ATCC 39315 / El Tor Inaba N16961)</name>
    <dbReference type="NCBI Taxonomy" id="243277"/>
    <lineage>
        <taxon>Bacteria</taxon>
        <taxon>Pseudomonadati</taxon>
        <taxon>Pseudomonadota</taxon>
        <taxon>Gammaproteobacteria</taxon>
        <taxon>Vibrionales</taxon>
        <taxon>Vibrionaceae</taxon>
        <taxon>Vibrio</taxon>
    </lineage>
</organism>
<sequence length="378" mass="41291">MIISASTDYRAAAKAKLPPFLFHYIDGGSYGEHTLRRNTDDLADIALRQRVLSDMSELSLETELFGEKMALPIALSPVGLTGMYARRGEVQAAQAAEAKGIPFTLSTVSVCPIEEVAPSIHRPIWFQLYVLKDRGFMKNVLERAKAAGVKNLVFTVDMPVPGARYRDMHSGMSGPNAAMRRVLQAMAHPSWAWDVGLLGKPHDLGNISKYRGSPTKLEDYIGWLGANFDPSISWKDLEWIRDFWDGPMIIKGILDTEDAKDAVRFGADGIVVSNHGGRQLDGVLSTVQALPAIADAVKGDLKILVDSGIRTGLDVVRMLALGADCTMLGRSFIYALAAQGRAGVENLLDLYEKEMRVAMTLTGAKSIAELSRDSLVKR</sequence>
<name>LLDD_VIBCH</name>
<reference key="1">
    <citation type="journal article" date="2000" name="Nature">
        <title>DNA sequence of both chromosomes of the cholera pathogen Vibrio cholerae.</title>
        <authorList>
            <person name="Heidelberg J.F."/>
            <person name="Eisen J.A."/>
            <person name="Nelson W.C."/>
            <person name="Clayton R.A."/>
            <person name="Gwinn M.L."/>
            <person name="Dodson R.J."/>
            <person name="Haft D.H."/>
            <person name="Hickey E.K."/>
            <person name="Peterson J.D."/>
            <person name="Umayam L.A."/>
            <person name="Gill S.R."/>
            <person name="Nelson K.E."/>
            <person name="Read T.D."/>
            <person name="Tettelin H."/>
            <person name="Richardson D.L."/>
            <person name="Ermolaeva M.D."/>
            <person name="Vamathevan J.J."/>
            <person name="Bass S."/>
            <person name="Qin H."/>
            <person name="Dragoi I."/>
            <person name="Sellers P."/>
            <person name="McDonald L.A."/>
            <person name="Utterback T.R."/>
            <person name="Fleischmann R.D."/>
            <person name="Nierman W.C."/>
            <person name="White O."/>
            <person name="Salzberg S.L."/>
            <person name="Smith H.O."/>
            <person name="Colwell R.R."/>
            <person name="Mekalanos J.J."/>
            <person name="Venter J.C."/>
            <person name="Fraser C.M."/>
        </authorList>
    </citation>
    <scope>NUCLEOTIDE SEQUENCE [LARGE SCALE GENOMIC DNA]</scope>
    <source>
        <strain>ATCC 39315 / El Tor Inaba N16961</strain>
    </source>
</reference>
<evidence type="ECO:0000255" key="1">
    <source>
        <dbReference type="HAMAP-Rule" id="MF_01559"/>
    </source>
</evidence>
<feature type="chain" id="PRO_0000206352" description="L-lactate dehydrogenase">
    <location>
        <begin position="1"/>
        <end position="378"/>
    </location>
</feature>
<feature type="domain" description="FMN hydroxy acid dehydrogenase" evidence="1">
    <location>
        <begin position="1"/>
        <end position="378"/>
    </location>
</feature>
<feature type="active site" description="Proton acceptor" evidence="1">
    <location>
        <position position="275"/>
    </location>
</feature>
<feature type="binding site" evidence="1">
    <location>
        <position position="24"/>
    </location>
    <ligand>
        <name>substrate</name>
    </ligand>
</feature>
<feature type="binding site" evidence="1">
    <location>
        <position position="106"/>
    </location>
    <ligand>
        <name>FMN</name>
        <dbReference type="ChEBI" id="CHEBI:58210"/>
    </ligand>
</feature>
<feature type="binding site" evidence="1">
    <location>
        <position position="127"/>
    </location>
    <ligand>
        <name>FMN</name>
        <dbReference type="ChEBI" id="CHEBI:58210"/>
    </ligand>
</feature>
<feature type="binding site" evidence="1">
    <location>
        <position position="129"/>
    </location>
    <ligand>
        <name>substrate</name>
    </ligand>
</feature>
<feature type="binding site" evidence="1">
    <location>
        <position position="155"/>
    </location>
    <ligand>
        <name>FMN</name>
        <dbReference type="ChEBI" id="CHEBI:58210"/>
    </ligand>
</feature>
<feature type="binding site" evidence="1">
    <location>
        <position position="164"/>
    </location>
    <ligand>
        <name>substrate</name>
    </ligand>
</feature>
<feature type="binding site" evidence="1">
    <location>
        <position position="251"/>
    </location>
    <ligand>
        <name>FMN</name>
        <dbReference type="ChEBI" id="CHEBI:58210"/>
    </ligand>
</feature>
<feature type="binding site" evidence="1">
    <location>
        <position position="278"/>
    </location>
    <ligand>
        <name>substrate</name>
    </ligand>
</feature>
<feature type="binding site" evidence="1">
    <location>
        <begin position="306"/>
        <end position="330"/>
    </location>
    <ligand>
        <name>FMN</name>
        <dbReference type="ChEBI" id="CHEBI:58210"/>
    </ligand>
</feature>
<comment type="function">
    <text evidence="1">Catalyzes the conversion of L-lactate to pyruvate. Is coupled to the respiratory chain.</text>
</comment>
<comment type="catalytic activity">
    <reaction evidence="1">
        <text>(S)-lactate + A = pyruvate + AH2</text>
        <dbReference type="Rhea" id="RHEA:45816"/>
        <dbReference type="ChEBI" id="CHEBI:13193"/>
        <dbReference type="ChEBI" id="CHEBI:15361"/>
        <dbReference type="ChEBI" id="CHEBI:16651"/>
        <dbReference type="ChEBI" id="CHEBI:17499"/>
    </reaction>
</comment>
<comment type="cofactor">
    <cofactor evidence="1">
        <name>FMN</name>
        <dbReference type="ChEBI" id="CHEBI:58210"/>
    </cofactor>
</comment>
<comment type="subcellular location">
    <subcellularLocation>
        <location evidence="1">Cell inner membrane</location>
        <topology evidence="1">Peripheral membrane protein</topology>
    </subcellularLocation>
</comment>
<comment type="similarity">
    <text evidence="1">Belongs to the FMN-dependent alpha-hydroxy acid dehydrogenase family.</text>
</comment>
<proteinExistence type="inferred from homology"/>
<keyword id="KW-0997">Cell inner membrane</keyword>
<keyword id="KW-1003">Cell membrane</keyword>
<keyword id="KW-0285">Flavoprotein</keyword>
<keyword id="KW-0288">FMN</keyword>
<keyword id="KW-0472">Membrane</keyword>
<keyword id="KW-0560">Oxidoreductase</keyword>
<keyword id="KW-1185">Reference proteome</keyword>
<accession>Q9KKW6</accession>